<name>SYP_METBU</name>
<protein>
    <recommendedName>
        <fullName evidence="1">Proline--tRNA ligase</fullName>
        <ecNumber evidence="1">6.1.1.15</ecNumber>
    </recommendedName>
    <alternativeName>
        <fullName evidence="1">Prolyl-tRNA synthetase</fullName>
        <shortName evidence="1">ProRS</shortName>
    </alternativeName>
</protein>
<feature type="chain" id="PRO_0000288419" description="Proline--tRNA ligase">
    <location>
        <begin position="1"/>
        <end position="478"/>
    </location>
</feature>
<organism>
    <name type="scientific">Methanococcoides burtonii (strain DSM 6242 / NBRC 107633 / OCM 468 / ACE-M)</name>
    <dbReference type="NCBI Taxonomy" id="259564"/>
    <lineage>
        <taxon>Archaea</taxon>
        <taxon>Methanobacteriati</taxon>
        <taxon>Methanobacteriota</taxon>
        <taxon>Stenosarchaea group</taxon>
        <taxon>Methanomicrobia</taxon>
        <taxon>Methanosarcinales</taxon>
        <taxon>Methanosarcinaceae</taxon>
        <taxon>Methanococcoides</taxon>
    </lineage>
</organism>
<proteinExistence type="inferred from homology"/>
<sequence length="478" mass="54439">MAEQEKEATLPSKENFSEWYNGMLQIAEIMDVRYPVKGSYVWYPFGFSIRRNVYDIIRGLLDKDHQETLFPLLIPENEFMKEAEHIKGFEEEVYWVLNGGTTPLDVKLALRPTSETAIYPMYRLWVRSHADLPLKLYQIVNTFRYETKHTRPLIRLREITSFKEAHTVHATWDEAASQVEEAIRLYIEFYKRLAIPVLPSKRPSWDKFPGADYTIAVDSLMPDGKTLQVGTAHHLGDNFAKTFDIKYEDVDGEQVYAHQTCYGVSERCIATLLSTHGDDKGLVLPPEVAPTQVVIIPIIFKEPEAVLNACNDVKAELEAAGVRVTIDDSDKRPGSKYYKWEMKGVPLRIEIGPRDLKNEAAMLARRDTGEKEQVPLASIKDEVLSRFKIIQTSLLEKATSELNERIFDCSTVDDVKEKVQDGIALVPWCGEEKCGLDLDEQVGAGILGIPTDMDEDGTYKCPICSKETRTRVYVARTY</sequence>
<reference key="1">
    <citation type="journal article" date="2009" name="ISME J.">
        <title>The genome sequence of the psychrophilic archaeon, Methanococcoides burtonii: the role of genome evolution in cold adaptation.</title>
        <authorList>
            <person name="Allen M.A."/>
            <person name="Lauro F.M."/>
            <person name="Williams T.J."/>
            <person name="Burg D."/>
            <person name="Siddiqui K.S."/>
            <person name="De Francisci D."/>
            <person name="Chong K.W."/>
            <person name="Pilak O."/>
            <person name="Chew H.H."/>
            <person name="De Maere M.Z."/>
            <person name="Ting L."/>
            <person name="Katrib M."/>
            <person name="Ng C."/>
            <person name="Sowers K.R."/>
            <person name="Galperin M.Y."/>
            <person name="Anderson I.J."/>
            <person name="Ivanova N."/>
            <person name="Dalin E."/>
            <person name="Martinez M."/>
            <person name="Lapidus A."/>
            <person name="Hauser L."/>
            <person name="Land M."/>
            <person name="Thomas T."/>
            <person name="Cavicchioli R."/>
        </authorList>
    </citation>
    <scope>NUCLEOTIDE SEQUENCE [LARGE SCALE GENOMIC DNA]</scope>
    <source>
        <strain>DSM 6242 / NBRC 107633 / OCM 468 / ACE-M</strain>
    </source>
</reference>
<accession>Q12ZC6</accession>
<keyword id="KW-0030">Aminoacyl-tRNA synthetase</keyword>
<keyword id="KW-0067">ATP-binding</keyword>
<keyword id="KW-0963">Cytoplasm</keyword>
<keyword id="KW-0436">Ligase</keyword>
<keyword id="KW-0547">Nucleotide-binding</keyword>
<keyword id="KW-0648">Protein biosynthesis</keyword>
<comment type="function">
    <text evidence="1">Catalyzes the attachment of proline to tRNA(Pro) in a two-step reaction: proline is first activated by ATP to form Pro-AMP and then transferred to the acceptor end of tRNA(Pro).</text>
</comment>
<comment type="catalytic activity">
    <reaction evidence="1">
        <text>tRNA(Pro) + L-proline + ATP = L-prolyl-tRNA(Pro) + AMP + diphosphate</text>
        <dbReference type="Rhea" id="RHEA:14305"/>
        <dbReference type="Rhea" id="RHEA-COMP:9700"/>
        <dbReference type="Rhea" id="RHEA-COMP:9702"/>
        <dbReference type="ChEBI" id="CHEBI:30616"/>
        <dbReference type="ChEBI" id="CHEBI:33019"/>
        <dbReference type="ChEBI" id="CHEBI:60039"/>
        <dbReference type="ChEBI" id="CHEBI:78442"/>
        <dbReference type="ChEBI" id="CHEBI:78532"/>
        <dbReference type="ChEBI" id="CHEBI:456215"/>
        <dbReference type="EC" id="6.1.1.15"/>
    </reaction>
</comment>
<comment type="subunit">
    <text evidence="1">Homodimer.</text>
</comment>
<comment type="subcellular location">
    <subcellularLocation>
        <location evidence="1">Cytoplasm</location>
    </subcellularLocation>
</comment>
<comment type="domain">
    <text evidence="1">Consists of three domains: the N-terminal catalytic domain, the anticodon-binding domain and the C-terminal extension.</text>
</comment>
<comment type="similarity">
    <text evidence="1">Belongs to the class-II aminoacyl-tRNA synthetase family. ProS type 3 subfamily.</text>
</comment>
<gene>
    <name evidence="1" type="primary">proS</name>
    <name type="ordered locus">Mbur_0190</name>
</gene>
<dbReference type="EC" id="6.1.1.15" evidence="1"/>
<dbReference type="EMBL" id="CP000300">
    <property type="protein sequence ID" value="ABE51200.1"/>
    <property type="molecule type" value="Genomic_DNA"/>
</dbReference>
<dbReference type="RefSeq" id="WP_011498362.1">
    <property type="nucleotide sequence ID" value="NC_007955.1"/>
</dbReference>
<dbReference type="SMR" id="Q12ZC6"/>
<dbReference type="STRING" id="259564.Mbur_0190"/>
<dbReference type="GeneID" id="3997157"/>
<dbReference type="KEGG" id="mbu:Mbur_0190"/>
<dbReference type="HOGENOM" id="CLU_001882_4_2_2"/>
<dbReference type="OrthoDB" id="7375at2157"/>
<dbReference type="Proteomes" id="UP000001979">
    <property type="component" value="Chromosome"/>
</dbReference>
<dbReference type="GO" id="GO:0017101">
    <property type="term" value="C:aminoacyl-tRNA synthetase multienzyme complex"/>
    <property type="evidence" value="ECO:0007669"/>
    <property type="project" value="TreeGrafter"/>
</dbReference>
<dbReference type="GO" id="GO:0005737">
    <property type="term" value="C:cytoplasm"/>
    <property type="evidence" value="ECO:0007669"/>
    <property type="project" value="UniProtKB-SubCell"/>
</dbReference>
<dbReference type="GO" id="GO:0005524">
    <property type="term" value="F:ATP binding"/>
    <property type="evidence" value="ECO:0007669"/>
    <property type="project" value="UniProtKB-UniRule"/>
</dbReference>
<dbReference type="GO" id="GO:0004827">
    <property type="term" value="F:proline-tRNA ligase activity"/>
    <property type="evidence" value="ECO:0007669"/>
    <property type="project" value="UniProtKB-UniRule"/>
</dbReference>
<dbReference type="GO" id="GO:0006433">
    <property type="term" value="P:prolyl-tRNA aminoacylation"/>
    <property type="evidence" value="ECO:0007669"/>
    <property type="project" value="UniProtKB-UniRule"/>
</dbReference>
<dbReference type="CDD" id="cd00862">
    <property type="entry name" value="ProRS_anticodon_zinc"/>
    <property type="match status" value="1"/>
</dbReference>
<dbReference type="CDD" id="cd00778">
    <property type="entry name" value="ProRS_core_arch_euk"/>
    <property type="match status" value="1"/>
</dbReference>
<dbReference type="FunFam" id="3.40.50.800:FF:000005">
    <property type="entry name" value="bifunctional glutamate/proline--tRNA ligase"/>
    <property type="match status" value="1"/>
</dbReference>
<dbReference type="FunFam" id="3.30.930.10:FF:000037">
    <property type="entry name" value="Proline--tRNA ligase"/>
    <property type="match status" value="1"/>
</dbReference>
<dbReference type="Gene3D" id="3.40.50.800">
    <property type="entry name" value="Anticodon-binding domain"/>
    <property type="match status" value="1"/>
</dbReference>
<dbReference type="Gene3D" id="3.30.930.10">
    <property type="entry name" value="Bira Bifunctional Protein, Domain 2"/>
    <property type="match status" value="1"/>
</dbReference>
<dbReference type="Gene3D" id="3.30.110.30">
    <property type="entry name" value="C-terminal domain of ProRS"/>
    <property type="match status" value="1"/>
</dbReference>
<dbReference type="HAMAP" id="MF_01571">
    <property type="entry name" value="Pro_tRNA_synth_type3"/>
    <property type="match status" value="1"/>
</dbReference>
<dbReference type="InterPro" id="IPR002314">
    <property type="entry name" value="aa-tRNA-synt_IIb"/>
</dbReference>
<dbReference type="InterPro" id="IPR006195">
    <property type="entry name" value="aa-tRNA-synth_II"/>
</dbReference>
<dbReference type="InterPro" id="IPR045864">
    <property type="entry name" value="aa-tRNA-synth_II/BPL/LPL"/>
</dbReference>
<dbReference type="InterPro" id="IPR004154">
    <property type="entry name" value="Anticodon-bd"/>
</dbReference>
<dbReference type="InterPro" id="IPR036621">
    <property type="entry name" value="Anticodon-bd_dom_sf"/>
</dbReference>
<dbReference type="InterPro" id="IPR002316">
    <property type="entry name" value="Pro-tRNA-ligase_IIa"/>
</dbReference>
<dbReference type="InterPro" id="IPR004499">
    <property type="entry name" value="Pro-tRNA-ligase_IIa_arc-type"/>
</dbReference>
<dbReference type="InterPro" id="IPR016061">
    <property type="entry name" value="Pro-tRNA_ligase_II_C"/>
</dbReference>
<dbReference type="InterPro" id="IPR017449">
    <property type="entry name" value="Pro-tRNA_synth_II"/>
</dbReference>
<dbReference type="InterPro" id="IPR033721">
    <property type="entry name" value="ProRS_core_arch_euk"/>
</dbReference>
<dbReference type="NCBIfam" id="TIGR00408">
    <property type="entry name" value="proS_fam_I"/>
    <property type="match status" value="1"/>
</dbReference>
<dbReference type="PANTHER" id="PTHR43382:SF2">
    <property type="entry name" value="BIFUNCTIONAL GLUTAMATE_PROLINE--TRNA LIGASE"/>
    <property type="match status" value="1"/>
</dbReference>
<dbReference type="PANTHER" id="PTHR43382">
    <property type="entry name" value="PROLYL-TRNA SYNTHETASE"/>
    <property type="match status" value="1"/>
</dbReference>
<dbReference type="Pfam" id="PF03129">
    <property type="entry name" value="HGTP_anticodon"/>
    <property type="match status" value="1"/>
</dbReference>
<dbReference type="Pfam" id="PF09180">
    <property type="entry name" value="ProRS-C_1"/>
    <property type="match status" value="1"/>
</dbReference>
<dbReference type="Pfam" id="PF00587">
    <property type="entry name" value="tRNA-synt_2b"/>
    <property type="match status" value="1"/>
</dbReference>
<dbReference type="PRINTS" id="PR01046">
    <property type="entry name" value="TRNASYNTHPRO"/>
</dbReference>
<dbReference type="SMART" id="SM00946">
    <property type="entry name" value="ProRS-C_1"/>
    <property type="match status" value="1"/>
</dbReference>
<dbReference type="SUPFAM" id="SSF64586">
    <property type="entry name" value="C-terminal domain of ProRS"/>
    <property type="match status" value="1"/>
</dbReference>
<dbReference type="SUPFAM" id="SSF52954">
    <property type="entry name" value="Class II aaRS ABD-related"/>
    <property type="match status" value="1"/>
</dbReference>
<dbReference type="SUPFAM" id="SSF55681">
    <property type="entry name" value="Class II aaRS and biotin synthetases"/>
    <property type="match status" value="1"/>
</dbReference>
<dbReference type="PROSITE" id="PS50862">
    <property type="entry name" value="AA_TRNA_LIGASE_II"/>
    <property type="match status" value="1"/>
</dbReference>
<evidence type="ECO:0000255" key="1">
    <source>
        <dbReference type="HAMAP-Rule" id="MF_01571"/>
    </source>
</evidence>